<proteinExistence type="inferred from homology"/>
<accession>Q30Z43</accession>
<evidence type="ECO:0000255" key="1">
    <source>
        <dbReference type="HAMAP-Rule" id="MF_01328"/>
    </source>
</evidence>
<evidence type="ECO:0000256" key="2">
    <source>
        <dbReference type="SAM" id="MobiDB-lite"/>
    </source>
</evidence>
<evidence type="ECO:0000305" key="3"/>
<reference key="1">
    <citation type="journal article" date="2011" name="J. Bacteriol.">
        <title>Complete genome sequence and updated annotation of Desulfovibrio alaskensis G20.</title>
        <authorList>
            <person name="Hauser L.J."/>
            <person name="Land M.L."/>
            <person name="Brown S.D."/>
            <person name="Larimer F."/>
            <person name="Keller K.L."/>
            <person name="Rapp-Giles B.J."/>
            <person name="Price M.N."/>
            <person name="Lin M."/>
            <person name="Bruce D.C."/>
            <person name="Detter J.C."/>
            <person name="Tapia R."/>
            <person name="Han C.S."/>
            <person name="Goodwin L.A."/>
            <person name="Cheng J.F."/>
            <person name="Pitluck S."/>
            <person name="Copeland A."/>
            <person name="Lucas S."/>
            <person name="Nolan M."/>
            <person name="Lapidus A.L."/>
            <person name="Palumbo A.V."/>
            <person name="Wall J.D."/>
        </authorList>
    </citation>
    <scope>NUCLEOTIDE SEQUENCE [LARGE SCALE GENOMIC DNA]</scope>
    <source>
        <strain>ATCC BAA-1058 / DSM 17464 / G20</strain>
    </source>
</reference>
<name>RL4_OLEA2</name>
<feature type="chain" id="PRO_0000242368" description="Large ribosomal subunit protein uL4">
    <location>
        <begin position="1"/>
        <end position="206"/>
    </location>
</feature>
<feature type="region of interest" description="Disordered" evidence="2">
    <location>
        <begin position="44"/>
        <end position="80"/>
    </location>
</feature>
<sequence length="206" mass="22552">MAVVKVYDQDKKETGELTLAPEVFEVEVRPEILNLVVRAQRAAKRAGTHSVKTRSTISGGGAKPWRQKGTGRARSGSNRSPVWRGGAVVFGPQPRDYSFKVNKKVRKLALKMALSSRLAEENLMVVKGIELPEVKTKHMVKVAGALGLGKALVVTPEMDDKLVLSARNIPGITLMTPEQLSVFEILKHAQLVLLEGAVEPVQERLK</sequence>
<dbReference type="EMBL" id="CP000112">
    <property type="protein sequence ID" value="ABB39053.1"/>
    <property type="molecule type" value="Genomic_DNA"/>
</dbReference>
<dbReference type="RefSeq" id="WP_011368144.1">
    <property type="nucleotide sequence ID" value="NC_007519.1"/>
</dbReference>
<dbReference type="SMR" id="Q30Z43"/>
<dbReference type="STRING" id="207559.Dde_2256"/>
<dbReference type="KEGG" id="dde:Dde_2256"/>
<dbReference type="eggNOG" id="COG0088">
    <property type="taxonomic scope" value="Bacteria"/>
</dbReference>
<dbReference type="HOGENOM" id="CLU_041575_5_2_7"/>
<dbReference type="Proteomes" id="UP000002710">
    <property type="component" value="Chromosome"/>
</dbReference>
<dbReference type="GO" id="GO:1990904">
    <property type="term" value="C:ribonucleoprotein complex"/>
    <property type="evidence" value="ECO:0007669"/>
    <property type="project" value="UniProtKB-KW"/>
</dbReference>
<dbReference type="GO" id="GO:0005840">
    <property type="term" value="C:ribosome"/>
    <property type="evidence" value="ECO:0007669"/>
    <property type="project" value="UniProtKB-KW"/>
</dbReference>
<dbReference type="GO" id="GO:0019843">
    <property type="term" value="F:rRNA binding"/>
    <property type="evidence" value="ECO:0007669"/>
    <property type="project" value="UniProtKB-UniRule"/>
</dbReference>
<dbReference type="GO" id="GO:0003735">
    <property type="term" value="F:structural constituent of ribosome"/>
    <property type="evidence" value="ECO:0007669"/>
    <property type="project" value="InterPro"/>
</dbReference>
<dbReference type="GO" id="GO:0006412">
    <property type="term" value="P:translation"/>
    <property type="evidence" value="ECO:0007669"/>
    <property type="project" value="UniProtKB-UniRule"/>
</dbReference>
<dbReference type="Gene3D" id="3.40.1370.10">
    <property type="match status" value="1"/>
</dbReference>
<dbReference type="HAMAP" id="MF_01328_B">
    <property type="entry name" value="Ribosomal_uL4_B"/>
    <property type="match status" value="1"/>
</dbReference>
<dbReference type="InterPro" id="IPR002136">
    <property type="entry name" value="Ribosomal_uL4"/>
</dbReference>
<dbReference type="InterPro" id="IPR013005">
    <property type="entry name" value="Ribosomal_uL4-like"/>
</dbReference>
<dbReference type="InterPro" id="IPR023574">
    <property type="entry name" value="Ribosomal_uL4_dom_sf"/>
</dbReference>
<dbReference type="NCBIfam" id="TIGR03953">
    <property type="entry name" value="rplD_bact"/>
    <property type="match status" value="1"/>
</dbReference>
<dbReference type="PANTHER" id="PTHR10746">
    <property type="entry name" value="50S RIBOSOMAL PROTEIN L4"/>
    <property type="match status" value="1"/>
</dbReference>
<dbReference type="PANTHER" id="PTHR10746:SF6">
    <property type="entry name" value="LARGE RIBOSOMAL SUBUNIT PROTEIN UL4M"/>
    <property type="match status" value="1"/>
</dbReference>
<dbReference type="Pfam" id="PF00573">
    <property type="entry name" value="Ribosomal_L4"/>
    <property type="match status" value="1"/>
</dbReference>
<dbReference type="SUPFAM" id="SSF52166">
    <property type="entry name" value="Ribosomal protein L4"/>
    <property type="match status" value="1"/>
</dbReference>
<keyword id="KW-1185">Reference proteome</keyword>
<keyword id="KW-0687">Ribonucleoprotein</keyword>
<keyword id="KW-0689">Ribosomal protein</keyword>
<keyword id="KW-0694">RNA-binding</keyword>
<keyword id="KW-0699">rRNA-binding</keyword>
<organism>
    <name type="scientific">Oleidesulfovibrio alaskensis (strain ATCC BAA-1058 / DSM 17464 / G20)</name>
    <name type="common">Desulfovibrio alaskensis</name>
    <dbReference type="NCBI Taxonomy" id="207559"/>
    <lineage>
        <taxon>Bacteria</taxon>
        <taxon>Pseudomonadati</taxon>
        <taxon>Thermodesulfobacteriota</taxon>
        <taxon>Desulfovibrionia</taxon>
        <taxon>Desulfovibrionales</taxon>
        <taxon>Desulfovibrionaceae</taxon>
        <taxon>Oleidesulfovibrio</taxon>
    </lineage>
</organism>
<protein>
    <recommendedName>
        <fullName evidence="1">Large ribosomal subunit protein uL4</fullName>
    </recommendedName>
    <alternativeName>
        <fullName evidence="3">50S ribosomal protein L4</fullName>
    </alternativeName>
</protein>
<gene>
    <name evidence="1" type="primary">rplD</name>
    <name type="ordered locus">Dde_2256</name>
</gene>
<comment type="function">
    <text evidence="1">One of the primary rRNA binding proteins, this protein initially binds near the 5'-end of the 23S rRNA. It is important during the early stages of 50S assembly. It makes multiple contacts with different domains of the 23S rRNA in the assembled 50S subunit and ribosome.</text>
</comment>
<comment type="function">
    <text evidence="1">Forms part of the polypeptide exit tunnel.</text>
</comment>
<comment type="subunit">
    <text evidence="1">Part of the 50S ribosomal subunit.</text>
</comment>
<comment type="similarity">
    <text evidence="1">Belongs to the universal ribosomal protein uL4 family.</text>
</comment>